<evidence type="ECO:0000255" key="1">
    <source>
        <dbReference type="HAMAP-Rule" id="MF_00056"/>
    </source>
</evidence>
<organism>
    <name type="scientific">Bordetella avium (strain 197N)</name>
    <dbReference type="NCBI Taxonomy" id="360910"/>
    <lineage>
        <taxon>Bacteria</taxon>
        <taxon>Pseudomonadati</taxon>
        <taxon>Pseudomonadota</taxon>
        <taxon>Betaproteobacteria</taxon>
        <taxon>Burkholderiales</taxon>
        <taxon>Alcaligenaceae</taxon>
        <taxon>Bordetella</taxon>
    </lineage>
</organism>
<dbReference type="EC" id="2.5.1.55" evidence="1"/>
<dbReference type="EMBL" id="AM167904">
    <property type="protein sequence ID" value="CAJ50461.1"/>
    <property type="molecule type" value="Genomic_DNA"/>
</dbReference>
<dbReference type="RefSeq" id="WP_012418491.1">
    <property type="nucleotide sequence ID" value="NC_010645.1"/>
</dbReference>
<dbReference type="SMR" id="Q2KVK9"/>
<dbReference type="STRING" id="360910.BAV2851"/>
<dbReference type="GeneID" id="92933900"/>
<dbReference type="KEGG" id="bav:BAV2851"/>
<dbReference type="eggNOG" id="COG2877">
    <property type="taxonomic scope" value="Bacteria"/>
</dbReference>
<dbReference type="HOGENOM" id="CLU_036666_0_0_4"/>
<dbReference type="OrthoDB" id="9776934at2"/>
<dbReference type="UniPathway" id="UPA00030"/>
<dbReference type="UniPathway" id="UPA00357">
    <property type="reaction ID" value="UER00474"/>
</dbReference>
<dbReference type="Proteomes" id="UP000001977">
    <property type="component" value="Chromosome"/>
</dbReference>
<dbReference type="GO" id="GO:0005737">
    <property type="term" value="C:cytoplasm"/>
    <property type="evidence" value="ECO:0007669"/>
    <property type="project" value="UniProtKB-SubCell"/>
</dbReference>
<dbReference type="GO" id="GO:0008676">
    <property type="term" value="F:3-deoxy-8-phosphooctulonate synthase activity"/>
    <property type="evidence" value="ECO:0007669"/>
    <property type="project" value="UniProtKB-UniRule"/>
</dbReference>
<dbReference type="GO" id="GO:0019294">
    <property type="term" value="P:keto-3-deoxy-D-manno-octulosonic acid biosynthetic process"/>
    <property type="evidence" value="ECO:0007669"/>
    <property type="project" value="UniProtKB-UniRule"/>
</dbReference>
<dbReference type="Gene3D" id="3.20.20.70">
    <property type="entry name" value="Aldolase class I"/>
    <property type="match status" value="1"/>
</dbReference>
<dbReference type="HAMAP" id="MF_00056">
    <property type="entry name" value="KDO8P_synth"/>
    <property type="match status" value="1"/>
</dbReference>
<dbReference type="InterPro" id="IPR013785">
    <property type="entry name" value="Aldolase_TIM"/>
</dbReference>
<dbReference type="InterPro" id="IPR006218">
    <property type="entry name" value="DAHP1/KDSA"/>
</dbReference>
<dbReference type="InterPro" id="IPR006269">
    <property type="entry name" value="KDO8P_synthase"/>
</dbReference>
<dbReference type="NCBIfam" id="TIGR01362">
    <property type="entry name" value="KDO8P_synth"/>
    <property type="match status" value="1"/>
</dbReference>
<dbReference type="NCBIfam" id="NF003543">
    <property type="entry name" value="PRK05198.1"/>
    <property type="match status" value="1"/>
</dbReference>
<dbReference type="NCBIfam" id="NF009109">
    <property type="entry name" value="PRK12457.1"/>
    <property type="match status" value="1"/>
</dbReference>
<dbReference type="PANTHER" id="PTHR21057">
    <property type="entry name" value="PHOSPHO-2-DEHYDRO-3-DEOXYHEPTONATE ALDOLASE"/>
    <property type="match status" value="1"/>
</dbReference>
<dbReference type="Pfam" id="PF00793">
    <property type="entry name" value="DAHP_synth_1"/>
    <property type="match status" value="1"/>
</dbReference>
<dbReference type="SUPFAM" id="SSF51569">
    <property type="entry name" value="Aldolase"/>
    <property type="match status" value="1"/>
</dbReference>
<protein>
    <recommendedName>
        <fullName evidence="1">2-dehydro-3-deoxyphosphooctonate aldolase</fullName>
        <ecNumber evidence="1">2.5.1.55</ecNumber>
    </recommendedName>
    <alternativeName>
        <fullName evidence="1">3-deoxy-D-manno-octulosonic acid 8-phosphate synthase</fullName>
    </alternativeName>
    <alternativeName>
        <fullName evidence="1">KDO-8-phosphate synthase</fullName>
        <shortName evidence="1">KDO 8-P synthase</shortName>
        <shortName evidence="1">KDOPS</shortName>
    </alternativeName>
    <alternativeName>
        <fullName evidence="1">Phospho-2-dehydro-3-deoxyoctonate aldolase</fullName>
    </alternativeName>
</protein>
<gene>
    <name evidence="1" type="primary">kdsA</name>
    <name type="ordered locus">BAV2851</name>
</gene>
<reference key="1">
    <citation type="journal article" date="2006" name="J. Bacteriol.">
        <title>Comparison of the genome sequence of the poultry pathogen Bordetella avium with those of B. bronchiseptica, B. pertussis, and B. parapertussis reveals extensive diversity in surface structures associated with host interaction.</title>
        <authorList>
            <person name="Sebaihia M."/>
            <person name="Preston A."/>
            <person name="Maskell D.J."/>
            <person name="Kuzmiak H."/>
            <person name="Connell T.D."/>
            <person name="King N.D."/>
            <person name="Orndorff P.E."/>
            <person name="Miyamoto D.M."/>
            <person name="Thomson N.R."/>
            <person name="Harris D."/>
            <person name="Goble A."/>
            <person name="Lord A."/>
            <person name="Murphy L."/>
            <person name="Quail M.A."/>
            <person name="Rutter S."/>
            <person name="Squares R."/>
            <person name="Squares S."/>
            <person name="Woodward J."/>
            <person name="Parkhill J."/>
            <person name="Temple L.M."/>
        </authorList>
    </citation>
    <scope>NUCLEOTIDE SEQUENCE [LARGE SCALE GENOMIC DNA]</scope>
    <source>
        <strain>197N</strain>
    </source>
</reference>
<feature type="chain" id="PRO_1000003327" description="2-dehydro-3-deoxyphosphooctonate aldolase">
    <location>
        <begin position="1"/>
        <end position="282"/>
    </location>
</feature>
<comment type="catalytic activity">
    <reaction evidence="1">
        <text>D-arabinose 5-phosphate + phosphoenolpyruvate + H2O = 3-deoxy-alpha-D-manno-2-octulosonate-8-phosphate + phosphate</text>
        <dbReference type="Rhea" id="RHEA:14053"/>
        <dbReference type="ChEBI" id="CHEBI:15377"/>
        <dbReference type="ChEBI" id="CHEBI:43474"/>
        <dbReference type="ChEBI" id="CHEBI:57693"/>
        <dbReference type="ChEBI" id="CHEBI:58702"/>
        <dbReference type="ChEBI" id="CHEBI:85985"/>
        <dbReference type="EC" id="2.5.1.55"/>
    </reaction>
</comment>
<comment type="pathway">
    <text evidence="1">Carbohydrate biosynthesis; 3-deoxy-D-manno-octulosonate biosynthesis; 3-deoxy-D-manno-octulosonate from D-ribulose 5-phosphate: step 2/3.</text>
</comment>
<comment type="pathway">
    <text evidence="1">Bacterial outer membrane biogenesis; lipopolysaccharide biosynthesis.</text>
</comment>
<comment type="subcellular location">
    <subcellularLocation>
        <location evidence="1">Cytoplasm</location>
    </subcellularLocation>
</comment>
<comment type="similarity">
    <text evidence="1">Belongs to the KdsA family.</text>
</comment>
<sequence length="282" mass="30580">MQSIQIPTGIHCANNLPFVLFGGINVLESEDLALRSCAEYVRVTDKLGIPYVFKASFDKANRSSIHSYRGPGLDEGMRIFEKVKQEFGVPIITDVHEPWQAAIVAQTADILQLPAFLARQTDLVIALAKTGKVINIKKPQFLSPSQMAHIAEKFREAGNDQLILCDRGSCFGYDNLVVDMLGFDVMTKSTGGLPVIFDVTHALQQRDPGGAASGGRRQQSAQLARSAMALGLAGLFLEAHPDPAKALCDGPSALPLAQLEPYLAQIKAIDDLVKSFDPLHID</sequence>
<proteinExistence type="inferred from homology"/>
<name>KDSA_BORA1</name>
<accession>Q2KVK9</accession>
<keyword id="KW-0963">Cytoplasm</keyword>
<keyword id="KW-0448">Lipopolysaccharide biosynthesis</keyword>
<keyword id="KW-1185">Reference proteome</keyword>
<keyword id="KW-0808">Transferase</keyword>